<organism>
    <name type="scientific">Stutzerimonas stutzeri (strain A1501)</name>
    <name type="common">Pseudomonas stutzeri</name>
    <dbReference type="NCBI Taxonomy" id="379731"/>
    <lineage>
        <taxon>Bacteria</taxon>
        <taxon>Pseudomonadati</taxon>
        <taxon>Pseudomonadota</taxon>
        <taxon>Gammaproteobacteria</taxon>
        <taxon>Pseudomonadales</taxon>
        <taxon>Pseudomonadaceae</taxon>
        <taxon>Stutzerimonas</taxon>
    </lineage>
</organism>
<evidence type="ECO:0000255" key="1">
    <source>
        <dbReference type="HAMAP-Rule" id="MF_01322"/>
    </source>
</evidence>
<accession>A4VHM4</accession>
<feature type="chain" id="PRO_1000086406" description="DNA-directed RNA polymerase subunit beta'">
    <location>
        <begin position="1"/>
        <end position="1399"/>
    </location>
</feature>
<feature type="binding site" evidence="1">
    <location>
        <position position="70"/>
    </location>
    <ligand>
        <name>Zn(2+)</name>
        <dbReference type="ChEBI" id="CHEBI:29105"/>
        <label>1</label>
    </ligand>
</feature>
<feature type="binding site" evidence="1">
    <location>
        <position position="72"/>
    </location>
    <ligand>
        <name>Zn(2+)</name>
        <dbReference type="ChEBI" id="CHEBI:29105"/>
        <label>1</label>
    </ligand>
</feature>
<feature type="binding site" evidence="1">
    <location>
        <position position="85"/>
    </location>
    <ligand>
        <name>Zn(2+)</name>
        <dbReference type="ChEBI" id="CHEBI:29105"/>
        <label>1</label>
    </ligand>
</feature>
<feature type="binding site" evidence="1">
    <location>
        <position position="88"/>
    </location>
    <ligand>
        <name>Zn(2+)</name>
        <dbReference type="ChEBI" id="CHEBI:29105"/>
        <label>1</label>
    </ligand>
</feature>
<feature type="binding site" evidence="1">
    <location>
        <position position="460"/>
    </location>
    <ligand>
        <name>Mg(2+)</name>
        <dbReference type="ChEBI" id="CHEBI:18420"/>
    </ligand>
</feature>
<feature type="binding site" evidence="1">
    <location>
        <position position="462"/>
    </location>
    <ligand>
        <name>Mg(2+)</name>
        <dbReference type="ChEBI" id="CHEBI:18420"/>
    </ligand>
</feature>
<feature type="binding site" evidence="1">
    <location>
        <position position="464"/>
    </location>
    <ligand>
        <name>Mg(2+)</name>
        <dbReference type="ChEBI" id="CHEBI:18420"/>
    </ligand>
</feature>
<feature type="binding site" evidence="1">
    <location>
        <position position="814"/>
    </location>
    <ligand>
        <name>Zn(2+)</name>
        <dbReference type="ChEBI" id="CHEBI:29105"/>
        <label>2</label>
    </ligand>
</feature>
<feature type="binding site" evidence="1">
    <location>
        <position position="888"/>
    </location>
    <ligand>
        <name>Zn(2+)</name>
        <dbReference type="ChEBI" id="CHEBI:29105"/>
        <label>2</label>
    </ligand>
</feature>
<feature type="binding site" evidence="1">
    <location>
        <position position="895"/>
    </location>
    <ligand>
        <name>Zn(2+)</name>
        <dbReference type="ChEBI" id="CHEBI:29105"/>
        <label>2</label>
    </ligand>
</feature>
<feature type="binding site" evidence="1">
    <location>
        <position position="898"/>
    </location>
    <ligand>
        <name>Zn(2+)</name>
        <dbReference type="ChEBI" id="CHEBI:29105"/>
        <label>2</label>
    </ligand>
</feature>
<keyword id="KW-0240">DNA-directed RNA polymerase</keyword>
<keyword id="KW-0460">Magnesium</keyword>
<keyword id="KW-0479">Metal-binding</keyword>
<keyword id="KW-0548">Nucleotidyltransferase</keyword>
<keyword id="KW-1185">Reference proteome</keyword>
<keyword id="KW-0804">Transcription</keyword>
<keyword id="KW-0808">Transferase</keyword>
<keyword id="KW-0862">Zinc</keyword>
<proteinExistence type="inferred from homology"/>
<protein>
    <recommendedName>
        <fullName evidence="1">DNA-directed RNA polymerase subunit beta'</fullName>
        <shortName evidence="1">RNAP subunit beta'</shortName>
        <ecNumber evidence="1">2.7.7.6</ecNumber>
    </recommendedName>
    <alternativeName>
        <fullName evidence="1">RNA polymerase subunit beta'</fullName>
    </alternativeName>
    <alternativeName>
        <fullName evidence="1">Transcriptase subunit beta'</fullName>
    </alternativeName>
</protein>
<sequence length="1399" mass="154986">MKDLLNLLKNQGQIEEFDAIKIALASPEMIRSWSFGEVKKPETINYRTFKPERDGLFCAKIFGPVKDYECLCGKYKRLKHRGVICEKCGVEVALAKVRRERMAHIELASPVAHIWFLKSLPSRIGLLLDMTLRDIERVLYFESYVVIDPGMTTLEKGQLLNDEQYFEALEEFGDDFDARMGAEAVRELLIQIDLEHEIGRLREEIPQTNSETKIKKLSKRLKLMEAFHGSGNLPEWMILTVLPVLPPDLRPLVPLDGGRFATSDLNDLYRRVINRNNRLKRLLDLSAPDIIVRNEKRMLQEAVDALLDNGRRGRAITGSNKRPLKSLADMIKGKQGRFRQNLLGKRVDYSGRSVITVGPTLRLHQCGLPKKMALELFKPFIFGKLEMRGMATTIKAAKKMVERELPEVWDVLAEVIREHPVLLNRAPTLHRLGIQAFEPVLIEGKAIQLHPLVCAAYNADFDGDQMAVHVPLTLEAQLEARALMMSTNNILSPANGEPIIVPSQDVVLGLYYMTREAINAKGEGRVFADLQEVDRVFRAGEASLHARVKVRINETIKDRDGSITKNTRIVDTTVGRALLFQIVPEGMSFDVVNQPMKKKAISKLINLCYRTVGLKDTVIFADQLMYTGFAYSTISGVSIGVNDFVIPDEKARIIDAATEEVKEIESQYASGLVTQGEKYNKVIDLWSKANDEVSKAMMANLSKEKVIDREGNEAEQDSFNSMYMMADSGARGSAAQIRQLAGMRGLMAKPDGSIIETPITANFREGLNVLQYFISTHGARKGLADTALKTANSGYLTRRLVDVAQDLVVTEIDCGTEQGLHMTPHIEGGDVVEPLGERVLGRVIARDVLKPGTDDVLVPAGTLIDEQWVDFIELNSIDEVIVRSPISCETRYGICAKCYGRDLARGHQVNIGEAVGVIAAQSIGEPGTQLTMRTFHIGGAASRTSAVDNVLVKNGGTIRLHNLKHVERADGALVAVSRSGELAVADDFGRERERYKLPYGAVISVKEGDKVDAGAVVAKWDPHTHPIVTEMKGVVTFVGMEENITIKRQTDELTGLTNIEVMDPKDRPAAGKDIRPAIKMVDANGKELLLPGTDVPAQYFLPANALVGVADGAEINVGDVIARIPQETSKTRDITGGLPRVADLFEARRPKEPSILAEISGTISFGKETKGKRRLVITPTDGSDPYEELIPKWRHLNVFEGEQVNKGEVISDGPSNPHDILRLLGVSALARYIVNEIQDVYRLQGVKINDKHIETILRQMLRKVEITESGDSSFIKGDQMELTQVLEENERLSAEDKFVAKYVRVLLGITKASLSTESFISAASFQETTRVLTEAAVTGKRDYLRGLKENVVVGRLIPAGTGLAYHSERKRKRDAEKPVRVSADEVEAALTEALNSSGN</sequence>
<dbReference type="EC" id="2.7.7.6" evidence="1"/>
<dbReference type="EMBL" id="CP000304">
    <property type="protein sequence ID" value="ABP78475.1"/>
    <property type="molecule type" value="Genomic_DNA"/>
</dbReference>
<dbReference type="RefSeq" id="WP_011911982.1">
    <property type="nucleotide sequence ID" value="NC_009434.1"/>
</dbReference>
<dbReference type="SMR" id="A4VHM4"/>
<dbReference type="GeneID" id="66819920"/>
<dbReference type="KEGG" id="psa:PST_0778"/>
<dbReference type="eggNOG" id="COG0086">
    <property type="taxonomic scope" value="Bacteria"/>
</dbReference>
<dbReference type="HOGENOM" id="CLU_000524_3_1_6"/>
<dbReference type="Proteomes" id="UP000000233">
    <property type="component" value="Chromosome"/>
</dbReference>
<dbReference type="GO" id="GO:0000428">
    <property type="term" value="C:DNA-directed RNA polymerase complex"/>
    <property type="evidence" value="ECO:0007669"/>
    <property type="project" value="UniProtKB-KW"/>
</dbReference>
<dbReference type="GO" id="GO:0003677">
    <property type="term" value="F:DNA binding"/>
    <property type="evidence" value="ECO:0007669"/>
    <property type="project" value="UniProtKB-UniRule"/>
</dbReference>
<dbReference type="GO" id="GO:0003899">
    <property type="term" value="F:DNA-directed RNA polymerase activity"/>
    <property type="evidence" value="ECO:0007669"/>
    <property type="project" value="UniProtKB-UniRule"/>
</dbReference>
<dbReference type="GO" id="GO:0000287">
    <property type="term" value="F:magnesium ion binding"/>
    <property type="evidence" value="ECO:0007669"/>
    <property type="project" value="UniProtKB-UniRule"/>
</dbReference>
<dbReference type="GO" id="GO:0008270">
    <property type="term" value="F:zinc ion binding"/>
    <property type="evidence" value="ECO:0007669"/>
    <property type="project" value="UniProtKB-UniRule"/>
</dbReference>
<dbReference type="GO" id="GO:0006351">
    <property type="term" value="P:DNA-templated transcription"/>
    <property type="evidence" value="ECO:0007669"/>
    <property type="project" value="UniProtKB-UniRule"/>
</dbReference>
<dbReference type="CDD" id="cd02655">
    <property type="entry name" value="RNAP_beta'_C"/>
    <property type="match status" value="1"/>
</dbReference>
<dbReference type="CDD" id="cd01609">
    <property type="entry name" value="RNAP_beta'_N"/>
    <property type="match status" value="1"/>
</dbReference>
<dbReference type="FunFam" id="1.10.132.30:FF:000003">
    <property type="entry name" value="DNA-directed RNA polymerase subunit beta"/>
    <property type="match status" value="1"/>
</dbReference>
<dbReference type="FunFam" id="1.10.150.390:FF:000002">
    <property type="entry name" value="DNA-directed RNA polymerase subunit beta"/>
    <property type="match status" value="1"/>
</dbReference>
<dbReference type="FunFam" id="1.10.40.90:FF:000001">
    <property type="entry name" value="DNA-directed RNA polymerase subunit beta"/>
    <property type="match status" value="1"/>
</dbReference>
<dbReference type="FunFam" id="4.10.860.120:FF:000001">
    <property type="entry name" value="DNA-directed RNA polymerase subunit beta"/>
    <property type="match status" value="1"/>
</dbReference>
<dbReference type="Gene3D" id="1.10.132.30">
    <property type="match status" value="1"/>
</dbReference>
<dbReference type="Gene3D" id="1.10.150.390">
    <property type="match status" value="1"/>
</dbReference>
<dbReference type="Gene3D" id="1.10.1790.20">
    <property type="match status" value="1"/>
</dbReference>
<dbReference type="Gene3D" id="1.10.40.90">
    <property type="match status" value="1"/>
</dbReference>
<dbReference type="Gene3D" id="2.40.40.20">
    <property type="match status" value="1"/>
</dbReference>
<dbReference type="Gene3D" id="2.40.50.100">
    <property type="match status" value="3"/>
</dbReference>
<dbReference type="Gene3D" id="4.10.860.120">
    <property type="entry name" value="RNA polymerase II, clamp domain"/>
    <property type="match status" value="1"/>
</dbReference>
<dbReference type="Gene3D" id="1.10.274.100">
    <property type="entry name" value="RNA polymerase Rpb1, domain 3"/>
    <property type="match status" value="1"/>
</dbReference>
<dbReference type="HAMAP" id="MF_01322">
    <property type="entry name" value="RNApol_bact_RpoC"/>
    <property type="match status" value="1"/>
</dbReference>
<dbReference type="InterPro" id="IPR045867">
    <property type="entry name" value="DNA-dir_RpoC_beta_prime"/>
</dbReference>
<dbReference type="InterPro" id="IPR012754">
    <property type="entry name" value="DNA-dir_RpoC_beta_prime_bact"/>
</dbReference>
<dbReference type="InterPro" id="IPR000722">
    <property type="entry name" value="RNA_pol_asu"/>
</dbReference>
<dbReference type="InterPro" id="IPR006592">
    <property type="entry name" value="RNA_pol_N"/>
</dbReference>
<dbReference type="InterPro" id="IPR007080">
    <property type="entry name" value="RNA_pol_Rpb1_1"/>
</dbReference>
<dbReference type="InterPro" id="IPR007066">
    <property type="entry name" value="RNA_pol_Rpb1_3"/>
</dbReference>
<dbReference type="InterPro" id="IPR042102">
    <property type="entry name" value="RNA_pol_Rpb1_3_sf"/>
</dbReference>
<dbReference type="InterPro" id="IPR007083">
    <property type="entry name" value="RNA_pol_Rpb1_4"/>
</dbReference>
<dbReference type="InterPro" id="IPR007081">
    <property type="entry name" value="RNA_pol_Rpb1_5"/>
</dbReference>
<dbReference type="InterPro" id="IPR044893">
    <property type="entry name" value="RNA_pol_Rpb1_clamp_domain"/>
</dbReference>
<dbReference type="InterPro" id="IPR038120">
    <property type="entry name" value="Rpb1_funnel_sf"/>
</dbReference>
<dbReference type="NCBIfam" id="TIGR02386">
    <property type="entry name" value="rpoC_TIGR"/>
    <property type="match status" value="1"/>
</dbReference>
<dbReference type="PANTHER" id="PTHR19376">
    <property type="entry name" value="DNA-DIRECTED RNA POLYMERASE"/>
    <property type="match status" value="1"/>
</dbReference>
<dbReference type="PANTHER" id="PTHR19376:SF54">
    <property type="entry name" value="DNA-DIRECTED RNA POLYMERASE SUBUNIT BETA"/>
    <property type="match status" value="1"/>
</dbReference>
<dbReference type="Pfam" id="PF04997">
    <property type="entry name" value="RNA_pol_Rpb1_1"/>
    <property type="match status" value="1"/>
</dbReference>
<dbReference type="Pfam" id="PF00623">
    <property type="entry name" value="RNA_pol_Rpb1_2"/>
    <property type="match status" value="2"/>
</dbReference>
<dbReference type="Pfam" id="PF04983">
    <property type="entry name" value="RNA_pol_Rpb1_3"/>
    <property type="match status" value="1"/>
</dbReference>
<dbReference type="Pfam" id="PF05000">
    <property type="entry name" value="RNA_pol_Rpb1_4"/>
    <property type="match status" value="1"/>
</dbReference>
<dbReference type="Pfam" id="PF04998">
    <property type="entry name" value="RNA_pol_Rpb1_5"/>
    <property type="match status" value="1"/>
</dbReference>
<dbReference type="SMART" id="SM00663">
    <property type="entry name" value="RPOLA_N"/>
    <property type="match status" value="1"/>
</dbReference>
<dbReference type="SUPFAM" id="SSF64484">
    <property type="entry name" value="beta and beta-prime subunits of DNA dependent RNA-polymerase"/>
    <property type="match status" value="1"/>
</dbReference>
<name>RPOC_STUS1</name>
<reference key="1">
    <citation type="journal article" date="2008" name="Proc. Natl. Acad. Sci. U.S.A.">
        <title>Nitrogen fixation island and rhizosphere competence traits in the genome of root-associated Pseudomonas stutzeri A1501.</title>
        <authorList>
            <person name="Yan Y."/>
            <person name="Yang J."/>
            <person name="Dou Y."/>
            <person name="Chen M."/>
            <person name="Ping S."/>
            <person name="Peng J."/>
            <person name="Lu W."/>
            <person name="Zhang W."/>
            <person name="Yao Z."/>
            <person name="Li H."/>
            <person name="Liu W."/>
            <person name="He S."/>
            <person name="Geng L."/>
            <person name="Zhang X."/>
            <person name="Yang F."/>
            <person name="Yu H."/>
            <person name="Zhan Y."/>
            <person name="Li D."/>
            <person name="Lin Z."/>
            <person name="Wang Y."/>
            <person name="Elmerich C."/>
            <person name="Lin M."/>
            <person name="Jin Q."/>
        </authorList>
    </citation>
    <scope>NUCLEOTIDE SEQUENCE [LARGE SCALE GENOMIC DNA]</scope>
    <source>
        <strain>A1501</strain>
    </source>
</reference>
<gene>
    <name evidence="1" type="primary">rpoC</name>
    <name type="ordered locus">PST_0778</name>
</gene>
<comment type="function">
    <text evidence="1">DNA-dependent RNA polymerase catalyzes the transcription of DNA into RNA using the four ribonucleoside triphosphates as substrates.</text>
</comment>
<comment type="catalytic activity">
    <reaction evidence="1">
        <text>RNA(n) + a ribonucleoside 5'-triphosphate = RNA(n+1) + diphosphate</text>
        <dbReference type="Rhea" id="RHEA:21248"/>
        <dbReference type="Rhea" id="RHEA-COMP:14527"/>
        <dbReference type="Rhea" id="RHEA-COMP:17342"/>
        <dbReference type="ChEBI" id="CHEBI:33019"/>
        <dbReference type="ChEBI" id="CHEBI:61557"/>
        <dbReference type="ChEBI" id="CHEBI:140395"/>
        <dbReference type="EC" id="2.7.7.6"/>
    </reaction>
</comment>
<comment type="cofactor">
    <cofactor evidence="1">
        <name>Mg(2+)</name>
        <dbReference type="ChEBI" id="CHEBI:18420"/>
    </cofactor>
    <text evidence="1">Binds 1 Mg(2+) ion per subunit.</text>
</comment>
<comment type="cofactor">
    <cofactor evidence="1">
        <name>Zn(2+)</name>
        <dbReference type="ChEBI" id="CHEBI:29105"/>
    </cofactor>
    <text evidence="1">Binds 2 Zn(2+) ions per subunit.</text>
</comment>
<comment type="subunit">
    <text evidence="1">The RNAP catalytic core consists of 2 alpha, 1 beta, 1 beta' and 1 omega subunit. When a sigma factor is associated with the core the holoenzyme is formed, which can initiate transcription.</text>
</comment>
<comment type="similarity">
    <text evidence="1">Belongs to the RNA polymerase beta' chain family.</text>
</comment>